<organism>
    <name type="scientific">Saccharomyces cerevisiae (strain ATCC 204508 / S288c)</name>
    <name type="common">Baker's yeast</name>
    <dbReference type="NCBI Taxonomy" id="559292"/>
    <lineage>
        <taxon>Eukaryota</taxon>
        <taxon>Fungi</taxon>
        <taxon>Dikarya</taxon>
        <taxon>Ascomycota</taxon>
        <taxon>Saccharomycotina</taxon>
        <taxon>Saccharomycetes</taxon>
        <taxon>Saccharomycetales</taxon>
        <taxon>Saccharomycetaceae</taxon>
        <taxon>Saccharomyces</taxon>
    </lineage>
</organism>
<feature type="chain" id="PRO_0000094472" description="Anion/proton exchange transporter GEF1">
    <location>
        <begin position="1"/>
        <end position="779"/>
    </location>
</feature>
<feature type="chain" id="PRO_0000419270" description="GEF1 N-terminal">
    <location>
        <begin position="1"/>
        <end position="136"/>
    </location>
</feature>
<feature type="chain" id="PRO_0000419271" description="GEF1 C-terminal">
    <location>
        <begin position="137"/>
        <end position="779"/>
    </location>
</feature>
<feature type="topological domain" description="Cytoplasmic" evidence="2">
    <location>
        <begin position="1"/>
        <end position="75"/>
    </location>
</feature>
<feature type="transmembrane region" description="Helical" evidence="2">
    <location>
        <begin position="76"/>
        <end position="96"/>
    </location>
</feature>
<feature type="topological domain" description="Lumenal" evidence="2">
    <location>
        <begin position="97"/>
        <end position="154"/>
    </location>
</feature>
<feature type="transmembrane region" description="Helical" evidence="2">
    <location>
        <begin position="155"/>
        <end position="175"/>
    </location>
</feature>
<feature type="topological domain" description="Cytoplasmic" evidence="2">
    <location>
        <begin position="176"/>
        <end position="177"/>
    </location>
</feature>
<feature type="transmembrane region" description="Helical" evidence="2">
    <location>
        <begin position="178"/>
        <end position="198"/>
    </location>
</feature>
<feature type="topological domain" description="Lumenal" evidence="2">
    <location>
        <begin position="199"/>
        <end position="203"/>
    </location>
</feature>
<feature type="transmembrane region" description="Helical" evidence="2">
    <location>
        <begin position="204"/>
        <end position="224"/>
    </location>
</feature>
<feature type="topological domain" description="Cytoplasmic" evidence="2">
    <location>
        <begin position="225"/>
        <end position="264"/>
    </location>
</feature>
<feature type="transmembrane region" description="Helical" evidence="2">
    <location>
        <begin position="265"/>
        <end position="285"/>
    </location>
</feature>
<feature type="topological domain" description="Lumenal" evidence="2">
    <location>
        <begin position="286"/>
        <end position="296"/>
    </location>
</feature>
<feature type="transmembrane region" description="Helical" evidence="2">
    <location>
        <begin position="297"/>
        <end position="319"/>
    </location>
</feature>
<feature type="topological domain" description="Cytoplasmic" evidence="2">
    <location>
        <begin position="320"/>
        <end position="336"/>
    </location>
</feature>
<feature type="transmembrane region" description="Helical" evidence="2">
    <location>
        <begin position="337"/>
        <end position="357"/>
    </location>
</feature>
<feature type="topological domain" description="Lumenal" evidence="2">
    <location>
        <begin position="358"/>
        <end position="369"/>
    </location>
</feature>
<feature type="transmembrane region" description="Helical" evidence="2">
    <location>
        <begin position="370"/>
        <end position="390"/>
    </location>
</feature>
<feature type="topological domain" description="Cytoplasmic" evidence="2">
    <location>
        <begin position="391"/>
        <end position="436"/>
    </location>
</feature>
<feature type="transmembrane region" description="Helical" evidence="2">
    <location>
        <begin position="437"/>
        <end position="457"/>
    </location>
</feature>
<feature type="topological domain" description="Lumenal" evidence="2">
    <location>
        <begin position="458"/>
        <end position="465"/>
    </location>
</feature>
<feature type="transmembrane region" description="Helical" evidence="2">
    <location>
        <begin position="466"/>
        <end position="486"/>
    </location>
</feature>
<feature type="topological domain" description="Cytoplasmic" evidence="2">
    <location>
        <begin position="487"/>
        <end position="500"/>
    </location>
</feature>
<feature type="transmembrane region" description="Helical" evidence="2">
    <location>
        <begin position="501"/>
        <end position="523"/>
    </location>
</feature>
<feature type="topological domain" description="Lumenal" evidence="2">
    <location>
        <begin position="524"/>
        <end position="529"/>
    </location>
</feature>
<feature type="transmembrane region" description="Helical" evidence="2">
    <location>
        <begin position="530"/>
        <end position="552"/>
    </location>
</feature>
<feature type="topological domain" description="Cytoplasmic" evidence="2">
    <location>
        <begin position="553"/>
        <end position="779"/>
    </location>
</feature>
<feature type="domain" description="CBS 1" evidence="3">
    <location>
        <begin position="591"/>
        <end position="659"/>
    </location>
</feature>
<feature type="domain" description="CBS 2" evidence="3">
    <location>
        <begin position="688"/>
        <end position="744"/>
    </location>
</feature>
<feature type="site" description="Cleavage; by KEX2">
    <location>
        <begin position="136"/>
        <end position="137"/>
    </location>
</feature>
<feature type="site" description="Mediates proton transfer from the outer aqueous phase to the interior of the protein; involved in linking H(+) and Cl(-) transport" evidence="1">
    <location>
        <position position="230"/>
    </location>
</feature>
<feature type="site" description="Mediates proton transfer from the protein to the inner aqueous phase" evidence="1">
    <location>
        <position position="287"/>
    </location>
</feature>
<feature type="sequence conflict" description="In Ref. 1; CAA80663." evidence="11" ref="1">
    <original>G</original>
    <variation>R</variation>
    <location>
        <position position="13"/>
    </location>
</feature>
<feature type="sequence conflict" description="In Ref. 1; CAA80663." evidence="11" ref="1">
    <original>F</original>
    <variation>L</variation>
    <location>
        <position position="207"/>
    </location>
</feature>
<feature type="sequence conflict" description="In Ref. 1; CAA80663." evidence="11" ref="1">
    <original>S</original>
    <variation>T</variation>
    <location>
        <position position="257"/>
    </location>
</feature>
<feature type="sequence conflict" description="In Ref. 1; CAA80663." evidence="11" ref="1">
    <original>I</original>
    <variation>L</variation>
    <location>
        <position position="262"/>
    </location>
</feature>
<feature type="sequence conflict" description="In Ref. 1; CAA80663." evidence="11" ref="1">
    <original>T</original>
    <variation>I</variation>
    <location>
        <position position="497"/>
    </location>
</feature>
<sequence>MPTTYVPINQPIGDGEDVIDTNRFTNIPETQNFDQFVTIDKIAEENRPLSVDSDREFLNSKYRHYREVIWDRAKTFITLSSTAIVIGCIAGFLQVFTETLVNWKTGHCQRNWLLNKSFCCNGVVNEVTSTSNLLLKRQEFECEAQGLWIAWKGHVSPFIIFMLLSVLFALISTLLVKYVAPMATGSGISEIKVWVSGFEYNKEFLGFLTLVIKSVALPLAISSGLSVGKEGPSVHYATCCGYLLTKWLLRDTLTYSSQYEYITAASGAGVAVAFGAPIGGVLFGLEEIASANRFNSSTLWKSYYVALVAITTLKYIDPFRNGRVILFNVTYDRDWKVQEIPIFIALGIFGGLYGKYISKWNINFIHFRKMYLSSWPVQEVLFLATLTALISYFNEFLKLDMTESMGILFHECVKNDNTSTFSHRLCQLDENTHAFEFLKIFTSLCFATVIRALLVVVSYGARVPAGIFVPSMAVGATFGRAVSLLVERFISGPSVITPGAYAFLGAAATLSGITNLTLTVVVIMFELTGAFMYIIPLMIVVAITRIILSTSGISGGIADQMIMVNGFPYLEDEQDEEEEETLEKYTAEQLMSSKLITINETIYLSELESLLYDSASEYSVHGFPITKDEDKFEKEKRCIGYVLKRHLASKIMMQSVNSTKAQTTLVYFNKSNEELGHRENCIGFKDIMNESPISVKKAVPVTLLFRMFKELGCKTIIVEESGILKGLVTAKDILRFKRIKYREVHGAKFTYNEALDRRCWSVIHFIIKRFTTNRNGNVI</sequence>
<accession>P37020</accession>
<accession>D6VWL1</accession>
<name>GEF1_YEAST</name>
<reference key="1">
    <citation type="journal article" date="1993" name="Mol. Gen. Genet.">
        <title>The GEF1 gene of Saccharomyces cerevisiae encodes an integral membrane protein; mutations in which have effects on respiration and iron-limited growth.</title>
        <authorList>
            <person name="Greene J.R."/>
            <person name="Brown N.H."/>
            <person name="Didomenico B.J."/>
            <person name="Kaplan J."/>
            <person name="Eide D.J."/>
        </authorList>
    </citation>
    <scope>NUCLEOTIDE SEQUENCE [GENOMIC DNA]</scope>
    <scope>FUNCTION</scope>
    <source>
        <strain>ATCC 204508 / S288c</strain>
    </source>
</reference>
<reference key="2">
    <citation type="journal article" date="1994" name="J. Mol. Biol.">
        <title>A voltage-gated chloride channel in the yeast Saccharomyces cerevisiae.</title>
        <authorList>
            <person name="Huang M.-E."/>
            <person name="Chuat J.-C."/>
            <person name="Galibert F."/>
        </authorList>
    </citation>
    <scope>NUCLEOTIDE SEQUENCE [GENOMIC DNA]</scope>
    <source>
        <strain>ATCC 204508 / S288c</strain>
    </source>
</reference>
<reference key="3">
    <citation type="journal article" date="1995" name="Yeast">
        <title>Analysis of a 42.5 kb DNA sequence of chromosome X reveals three tRNA genes and 14 new open reading frames including a gene most probably belonging to the family of ubiquitin-protein ligases.</title>
        <authorList>
            <person name="Huang M.-E."/>
            <person name="Chuat J.-C."/>
            <person name="Galibert F."/>
        </authorList>
    </citation>
    <scope>NUCLEOTIDE SEQUENCE [GENOMIC DNA]</scope>
    <source>
        <strain>ATCC 204508 / S288c</strain>
    </source>
</reference>
<reference key="4">
    <citation type="journal article" date="1996" name="EMBO J.">
        <title>Complete nucleotide sequence of Saccharomyces cerevisiae chromosome X.</title>
        <authorList>
            <person name="Galibert F."/>
            <person name="Alexandraki D."/>
            <person name="Baur A."/>
            <person name="Boles E."/>
            <person name="Chalwatzis N."/>
            <person name="Chuat J.-C."/>
            <person name="Coster F."/>
            <person name="Cziepluch C."/>
            <person name="de Haan M."/>
            <person name="Domdey H."/>
            <person name="Durand P."/>
            <person name="Entian K.-D."/>
            <person name="Gatius M."/>
            <person name="Goffeau A."/>
            <person name="Grivell L.A."/>
            <person name="Hennemann A."/>
            <person name="Herbert C.J."/>
            <person name="Heumann K."/>
            <person name="Hilger F."/>
            <person name="Hollenberg C.P."/>
            <person name="Huang M.-E."/>
            <person name="Jacq C."/>
            <person name="Jauniaux J.-C."/>
            <person name="Katsoulou C."/>
            <person name="Kirchrath L."/>
            <person name="Kleine K."/>
            <person name="Kordes E."/>
            <person name="Koetter P."/>
            <person name="Liebl S."/>
            <person name="Louis E.J."/>
            <person name="Manus V."/>
            <person name="Mewes H.-W."/>
            <person name="Miosga T."/>
            <person name="Obermaier B."/>
            <person name="Perea J."/>
            <person name="Pohl T.M."/>
            <person name="Portetelle D."/>
            <person name="Pujol A."/>
            <person name="Purnelle B."/>
            <person name="Ramezani Rad M."/>
            <person name="Rasmussen S.W."/>
            <person name="Rose M."/>
            <person name="Rossau R."/>
            <person name="Schaaff-Gerstenschlaeger I."/>
            <person name="Smits P.H.M."/>
            <person name="Scarcez T."/>
            <person name="Soriano N."/>
            <person name="To Van D."/>
            <person name="Tzermia M."/>
            <person name="Van Broekhoven A."/>
            <person name="Vandenbol M."/>
            <person name="Wedler H."/>
            <person name="von Wettstein D."/>
            <person name="Wambutt R."/>
            <person name="Zagulski M."/>
            <person name="Zollner A."/>
            <person name="Karpfinger-Hartl L."/>
        </authorList>
    </citation>
    <scope>NUCLEOTIDE SEQUENCE [LARGE SCALE GENOMIC DNA]</scope>
    <source>
        <strain>ATCC 204508 / S288c</strain>
    </source>
</reference>
<reference key="5">
    <citation type="journal article" date="2014" name="G3 (Bethesda)">
        <title>The reference genome sequence of Saccharomyces cerevisiae: Then and now.</title>
        <authorList>
            <person name="Engel S.R."/>
            <person name="Dietrich F.S."/>
            <person name="Fisk D.G."/>
            <person name="Binkley G."/>
            <person name="Balakrishnan R."/>
            <person name="Costanzo M.C."/>
            <person name="Dwight S.S."/>
            <person name="Hitz B.C."/>
            <person name="Karra K."/>
            <person name="Nash R.S."/>
            <person name="Weng S."/>
            <person name="Wong E.D."/>
            <person name="Lloyd P."/>
            <person name="Skrzypek M.S."/>
            <person name="Miyasato S.R."/>
            <person name="Simison M."/>
            <person name="Cherry J.M."/>
        </authorList>
    </citation>
    <scope>GENOME REANNOTATION</scope>
    <source>
        <strain>ATCC 204508 / S288c</strain>
    </source>
</reference>
<reference key="6">
    <citation type="journal article" date="1998" name="J. Biol. Chem.">
        <title>Golgi localization and functionally important domains in the NH2 and COOH terminus of the yeast CLC putative chloride channel Gef1p.</title>
        <authorList>
            <person name="Schwappach B."/>
            <person name="Stobrawa S."/>
            <person name="Hechenberger M."/>
            <person name="Steinmeyer K."/>
            <person name="Jentsch T.J."/>
        </authorList>
    </citation>
    <scope>FUNCTION</scope>
    <scope>SUBCELLULAR LOCATION</scope>
</reference>
<reference key="7">
    <citation type="journal article" date="1998" name="Proc. Natl. Acad. Sci. U.S.A.">
        <title>The yeast CLC chloride channel functions in cation homeostasis.</title>
        <authorList>
            <person name="Gaxiola R.A."/>
            <person name="Yuan D.S."/>
            <person name="Klausner R.D."/>
            <person name="Fink G.R."/>
        </authorList>
    </citation>
    <scope>FUNCTION</scope>
    <scope>SUBCELLULAR LOCATION</scope>
</reference>
<reference key="8">
    <citation type="journal article" date="2002" name="Biochem. Biophys. Res. Commun.">
        <title>The Gef1 protein of Saccharomyces cerevisiae is associated with chloride channel activity.</title>
        <authorList>
            <person name="Flis K."/>
            <person name="Bednarczyk P."/>
            <person name="Hordejuk R."/>
            <person name="Szewczyk A."/>
            <person name="Berest V."/>
            <person name="Dolowy K."/>
            <person name="Edelman A."/>
            <person name="Kurlandzka A."/>
        </authorList>
    </citation>
    <scope>FUNCTION</scope>
</reference>
<reference key="9">
    <citation type="journal article" date="2005" name="FEBS Lett.">
        <title>The yeast CLC chloride channel is proteolytically processed by the furin-like protease Kex2p in the first extracellular loop.</title>
        <authorList>
            <person name="Wachter A."/>
            <person name="Schwappach B."/>
        </authorList>
    </citation>
    <scope>CLEAVAGE BY KEX2</scope>
    <scope>SUBCELLULAR LOCATION</scope>
</reference>
<reference key="10">
    <citation type="journal article" date="2006" name="J. Biol. Chem.">
        <title>The yeast Arr4p ATPase binds the chloride transporter Gef1p when copper is available in the cytosol.</title>
        <authorList>
            <person name="Metz J."/>
            <person name="Waechter A."/>
            <person name="Schmidt B."/>
            <person name="Bujnicki J.M."/>
            <person name="Schwappach B."/>
        </authorList>
    </citation>
    <scope>INTERACTION WITH GET3</scope>
</reference>
<reference key="11">
    <citation type="journal article" date="2006" name="Proc. Natl. Acad. Sci. U.S.A.">
        <title>A global topology map of the Saccharomyces cerevisiae membrane proteome.</title>
        <authorList>
            <person name="Kim H."/>
            <person name="Melen K."/>
            <person name="Oesterberg M."/>
            <person name="von Heijne G."/>
        </authorList>
    </citation>
    <scope>TOPOLOGY [LARGE SCALE ANALYSIS]</scope>
    <source>
        <strain>ATCC 208353 / W303-1A</strain>
    </source>
</reference>
<reference key="12">
    <citation type="journal article" date="2007" name="FEMS Yeast Res.">
        <title>The product of the gene GEF1 of Saccharomyces cerevisiae transports Cl- across the plasma membrane.</title>
        <authorList>
            <person name="Lopez-Rodriguez A."/>
            <person name="Trejo A.C."/>
            <person name="Coyne L."/>
            <person name="Halliwell R.F."/>
            <person name="Miledi R."/>
            <person name="Martinez-Torres A."/>
        </authorList>
    </citation>
    <scope>FUNCTION</scope>
</reference>
<keyword id="KW-0129">CBS domain</keyword>
<keyword id="KW-0868">Chloride</keyword>
<keyword id="KW-0869">Chloride channel</keyword>
<keyword id="KW-0967">Endosome</keyword>
<keyword id="KW-0333">Golgi apparatus</keyword>
<keyword id="KW-0407">Ion channel</keyword>
<keyword id="KW-0406">Ion transport</keyword>
<keyword id="KW-0472">Membrane</keyword>
<keyword id="KW-1185">Reference proteome</keyword>
<keyword id="KW-0677">Repeat</keyword>
<keyword id="KW-0812">Transmembrane</keyword>
<keyword id="KW-1133">Transmembrane helix</keyword>
<keyword id="KW-0813">Transport</keyword>
<dbReference type="EMBL" id="Z23117">
    <property type="protein sequence ID" value="CAA80663.1"/>
    <property type="molecule type" value="Genomic_DNA"/>
</dbReference>
<dbReference type="EMBL" id="L29347">
    <property type="protein sequence ID" value="AAA53399.1"/>
    <property type="molecule type" value="Genomic_DNA"/>
</dbReference>
<dbReference type="EMBL" id="Z49540">
    <property type="protein sequence ID" value="CAA89567.1"/>
    <property type="molecule type" value="Genomic_DNA"/>
</dbReference>
<dbReference type="EMBL" id="L36344">
    <property type="protein sequence ID" value="AAA88741.1"/>
    <property type="molecule type" value="Genomic_DNA"/>
</dbReference>
<dbReference type="EMBL" id="BK006943">
    <property type="protein sequence ID" value="DAA08827.1"/>
    <property type="molecule type" value="Genomic_DNA"/>
</dbReference>
<dbReference type="PIR" id="S50054">
    <property type="entry name" value="S50054"/>
</dbReference>
<dbReference type="RefSeq" id="NP_012574.1">
    <property type="nucleotide sequence ID" value="NM_001181698.1"/>
</dbReference>
<dbReference type="SMR" id="P37020"/>
<dbReference type="BioGRID" id="33791">
    <property type="interactions" value="124"/>
</dbReference>
<dbReference type="DIP" id="DIP-3949N"/>
<dbReference type="FunCoup" id="P37020">
    <property type="interactions" value="424"/>
</dbReference>
<dbReference type="IntAct" id="P37020">
    <property type="interactions" value="9"/>
</dbReference>
<dbReference type="MINT" id="P37020"/>
<dbReference type="STRING" id="4932.YJR040W"/>
<dbReference type="TCDB" id="2.A.49.1.1">
    <property type="family name" value="the chloride carrier/channel (clc) family"/>
</dbReference>
<dbReference type="GlyGen" id="P37020">
    <property type="glycosylation" value="1 site"/>
</dbReference>
<dbReference type="iPTMnet" id="P37020"/>
<dbReference type="PaxDb" id="4932-YJR040W"/>
<dbReference type="PeptideAtlas" id="P37020"/>
<dbReference type="EnsemblFungi" id="YJR040W_mRNA">
    <property type="protein sequence ID" value="YJR040W"/>
    <property type="gene ID" value="YJR040W"/>
</dbReference>
<dbReference type="GeneID" id="853497"/>
<dbReference type="KEGG" id="sce:YJR040W"/>
<dbReference type="AGR" id="SGD:S000003801"/>
<dbReference type="SGD" id="S000003801">
    <property type="gene designation" value="GEF1"/>
</dbReference>
<dbReference type="VEuPathDB" id="FungiDB:YJR040W"/>
<dbReference type="eggNOG" id="KOG0475">
    <property type="taxonomic scope" value="Eukaryota"/>
</dbReference>
<dbReference type="HOGENOM" id="CLU_003181_2_2_1"/>
<dbReference type="InParanoid" id="P37020"/>
<dbReference type="OMA" id="MFLKINM"/>
<dbReference type="OrthoDB" id="44789at2759"/>
<dbReference type="BioCyc" id="YEAST:G3O-31675-MONOMER"/>
<dbReference type="Reactome" id="R-SCE-2672351">
    <property type="pathway name" value="Stimuli-sensing channels"/>
</dbReference>
<dbReference type="BioGRID-ORCS" id="853497">
    <property type="hits" value="7 hits in 10 CRISPR screens"/>
</dbReference>
<dbReference type="PRO" id="PR:P37020"/>
<dbReference type="Proteomes" id="UP000002311">
    <property type="component" value="Chromosome X"/>
</dbReference>
<dbReference type="RNAct" id="P37020">
    <property type="molecule type" value="protein"/>
</dbReference>
<dbReference type="GO" id="GO:0034707">
    <property type="term" value="C:chloride channel complex"/>
    <property type="evidence" value="ECO:0007669"/>
    <property type="project" value="UniProtKB-KW"/>
</dbReference>
<dbReference type="GO" id="GO:0005769">
    <property type="term" value="C:early endosome"/>
    <property type="evidence" value="ECO:0000318"/>
    <property type="project" value="GO_Central"/>
</dbReference>
<dbReference type="GO" id="GO:0005783">
    <property type="term" value="C:endoplasmic reticulum"/>
    <property type="evidence" value="ECO:0000314"/>
    <property type="project" value="SGD"/>
</dbReference>
<dbReference type="GO" id="GO:0005768">
    <property type="term" value="C:endosome"/>
    <property type="evidence" value="ECO:0000314"/>
    <property type="project" value="SGD"/>
</dbReference>
<dbReference type="GO" id="GO:0010008">
    <property type="term" value="C:endosome membrane"/>
    <property type="evidence" value="ECO:0007669"/>
    <property type="project" value="UniProtKB-SubCell"/>
</dbReference>
<dbReference type="GO" id="GO:0000324">
    <property type="term" value="C:fungal-type vacuole"/>
    <property type="evidence" value="ECO:0000314"/>
    <property type="project" value="SGD"/>
</dbReference>
<dbReference type="GO" id="GO:0005794">
    <property type="term" value="C:Golgi apparatus"/>
    <property type="evidence" value="ECO:0000314"/>
    <property type="project" value="SGD"/>
</dbReference>
<dbReference type="GO" id="GO:0005797">
    <property type="term" value="C:Golgi medial cisterna"/>
    <property type="evidence" value="ECO:0000314"/>
    <property type="project" value="SGD"/>
</dbReference>
<dbReference type="GO" id="GO:0000139">
    <property type="term" value="C:Golgi membrane"/>
    <property type="evidence" value="ECO:0007669"/>
    <property type="project" value="UniProtKB-SubCell"/>
</dbReference>
<dbReference type="GO" id="GO:0005886">
    <property type="term" value="C:plasma membrane"/>
    <property type="evidence" value="ECO:0000314"/>
    <property type="project" value="SGD"/>
</dbReference>
<dbReference type="GO" id="GO:0005247">
    <property type="term" value="F:voltage-gated chloride channel activity"/>
    <property type="evidence" value="ECO:0000314"/>
    <property type="project" value="SGD"/>
</dbReference>
<dbReference type="GO" id="GO:0006878">
    <property type="term" value="P:intracellular copper ion homeostasis"/>
    <property type="evidence" value="ECO:0000315"/>
    <property type="project" value="SGD"/>
</dbReference>
<dbReference type="GO" id="GO:0006879">
    <property type="term" value="P:intracellular iron ion homeostasis"/>
    <property type="evidence" value="ECO:0000315"/>
    <property type="project" value="SGD"/>
</dbReference>
<dbReference type="GO" id="GO:0034756">
    <property type="term" value="P:regulation of iron ion transport"/>
    <property type="evidence" value="ECO:0000315"/>
    <property type="project" value="CACAO"/>
</dbReference>
<dbReference type="CDD" id="cd04591">
    <property type="entry name" value="CBS_pair_voltage-gated_CLC_euk_bac"/>
    <property type="match status" value="1"/>
</dbReference>
<dbReference type="CDD" id="cd03684">
    <property type="entry name" value="ClC_3_like"/>
    <property type="match status" value="1"/>
</dbReference>
<dbReference type="Gene3D" id="3.10.580.10">
    <property type="entry name" value="CBS-domain"/>
    <property type="match status" value="1"/>
</dbReference>
<dbReference type="Gene3D" id="1.10.3080.10">
    <property type="entry name" value="Clc chloride channel"/>
    <property type="match status" value="1"/>
</dbReference>
<dbReference type="InterPro" id="IPR000644">
    <property type="entry name" value="CBS_dom"/>
</dbReference>
<dbReference type="InterPro" id="IPR046342">
    <property type="entry name" value="CBS_dom_sf"/>
</dbReference>
<dbReference type="InterPro" id="IPR014743">
    <property type="entry name" value="Cl-channel_core"/>
</dbReference>
<dbReference type="InterPro" id="IPR001807">
    <property type="entry name" value="ClC"/>
</dbReference>
<dbReference type="PANTHER" id="PTHR45711:SF9">
    <property type="entry name" value="ANION_PROTON EXCHANGE TRANSPORTER GEF1"/>
    <property type="match status" value="1"/>
</dbReference>
<dbReference type="PANTHER" id="PTHR45711">
    <property type="entry name" value="CHLORIDE CHANNEL PROTEIN"/>
    <property type="match status" value="1"/>
</dbReference>
<dbReference type="Pfam" id="PF00571">
    <property type="entry name" value="CBS"/>
    <property type="match status" value="1"/>
</dbReference>
<dbReference type="Pfam" id="PF00654">
    <property type="entry name" value="Voltage_CLC"/>
    <property type="match status" value="1"/>
</dbReference>
<dbReference type="PRINTS" id="PR00762">
    <property type="entry name" value="CLCHANNEL"/>
</dbReference>
<dbReference type="SMART" id="SM00116">
    <property type="entry name" value="CBS"/>
    <property type="match status" value="2"/>
</dbReference>
<dbReference type="SUPFAM" id="SSF54631">
    <property type="entry name" value="CBS-domain pair"/>
    <property type="match status" value="1"/>
</dbReference>
<dbReference type="SUPFAM" id="SSF81340">
    <property type="entry name" value="Clc chloride channel"/>
    <property type="match status" value="1"/>
</dbReference>
<dbReference type="PROSITE" id="PS51371">
    <property type="entry name" value="CBS"/>
    <property type="match status" value="2"/>
</dbReference>
<evidence type="ECO:0000250" key="1"/>
<evidence type="ECO:0000255" key="2"/>
<evidence type="ECO:0000255" key="3">
    <source>
        <dbReference type="PROSITE-ProRule" id="PRU00703"/>
    </source>
</evidence>
<evidence type="ECO:0000269" key="4">
    <source>
    </source>
</evidence>
<evidence type="ECO:0000269" key="5">
    <source>
    </source>
</evidence>
<evidence type="ECO:0000269" key="6">
    <source>
    </source>
</evidence>
<evidence type="ECO:0000269" key="7">
    <source>
    </source>
</evidence>
<evidence type="ECO:0000269" key="8">
    <source>
    </source>
</evidence>
<evidence type="ECO:0000269" key="9">
    <source>
    </source>
</evidence>
<evidence type="ECO:0000269" key="10">
    <source>
    </source>
</evidence>
<evidence type="ECO:0000305" key="11"/>
<evidence type="ECO:0000305" key="12">
    <source>
    </source>
</evidence>
<gene>
    <name type="primary">GEF1</name>
    <name type="synonym">CLCY1</name>
    <name type="ordered locus">YJR040W</name>
    <name type="ORF">J1616</name>
</gene>
<proteinExistence type="evidence at protein level"/>
<protein>
    <recommendedName>
        <fullName>Anion/proton exchange transporter GEF1</fullName>
    </recommendedName>
    <alternativeName>
        <fullName>CLC protein GEF1</fullName>
    </alternativeName>
    <alternativeName>
        <fullName>ClC-A</fullName>
    </alternativeName>
    <alternativeName>
        <fullName>ClC-Y1</fullName>
    </alternativeName>
    <alternativeName>
        <fullName>Voltage-gated chloride channel</fullName>
    </alternativeName>
    <component>
        <recommendedName>
            <fullName>GEF1 N-terminal</fullName>
        </recommendedName>
    </component>
    <component>
        <recommendedName>
            <fullName>GEF1 C-terminal</fullName>
        </recommendedName>
    </component>
</protein>
<comment type="function">
    <text evidence="4 7 8 9 10">Anion/proton exchange transporter involved in iron and copper cation homeostasis. Involved in intracellular iron metabolism during growth on fermentable and non fermentable carbon sources. Required for proper copper-loading and maturation of multicopper oxidase FET3. Important for adjusting intracellular compartment pH to more alkaline pH under iron limitation. May also transport chloride ions through the plasma membrane.</text>
</comment>
<comment type="subunit">
    <text evidence="1 6">Homodimer (By similarity). Interacts with GET3.</text>
</comment>
<comment type="interaction">
    <interactant intactId="EBI-7552">
        <id>P37020</id>
    </interactant>
    <interactant intactId="EBI-2989">
        <id>Q12154</id>
        <label>GET3</label>
    </interactant>
    <organismsDiffer>false</organismsDiffer>
    <experiments>6</experiments>
</comment>
<comment type="subcellular location">
    <subcellularLocation>
        <location evidence="10">Golgi apparatus membrane</location>
        <topology evidence="2">Multi-pass membrane protein</topology>
    </subcellularLocation>
    <subcellularLocation>
        <location evidence="12">Endosome membrane</location>
        <topology evidence="2">Multi-pass membrane protein</topology>
    </subcellularLocation>
    <subcellularLocation>
        <location evidence="4">Prevacuolar compartment membrane</location>
        <topology evidence="2">Multi-pass membrane protein</topology>
    </subcellularLocation>
</comment>
<comment type="PTM">
    <text evidence="5">Proteolytically processed in the secretory pathway by protease KEX2 within the first extracellular loop. However, both the N- and C-terminal products of the cleavage reaction are required for assembly of a functional channel.</text>
</comment>
<comment type="similarity">
    <text evidence="11">Belongs to the chloride channel (TC 2.A.49) family.</text>
</comment>
<comment type="caution">
    <text evidence="11">Was originally thought to be a voltage-gated ClC-type chloride channel.</text>
</comment>